<name>YCEI_SHIBS</name>
<accession>Q31ZB2</accession>
<proteinExistence type="inferred from homology"/>
<sequence length="191" mass="20912">MKKSLLGLTFASLMFSAGSAVAADYKIDKEGQHAFVNFRIQHLGYSWLYGTFKDFDGTFTFDEKNPAADKVNVTINTTSVDTNHAERDKHLRSADFLNTAKYPQATFTSTSVKKDGDELDITGDLTLNGVTKPVTLEAKLIGQGDDPWGGKRAGFEAEGKIKLKDFNIKTDLGPASQEVDLIISVEGVQQK</sequence>
<evidence type="ECO:0000255" key="1">
    <source>
        <dbReference type="HAMAP-Rule" id="MF_00780"/>
    </source>
</evidence>
<organism>
    <name type="scientific">Shigella boydii serotype 4 (strain Sb227)</name>
    <dbReference type="NCBI Taxonomy" id="300268"/>
    <lineage>
        <taxon>Bacteria</taxon>
        <taxon>Pseudomonadati</taxon>
        <taxon>Pseudomonadota</taxon>
        <taxon>Gammaproteobacteria</taxon>
        <taxon>Enterobacterales</taxon>
        <taxon>Enterobacteriaceae</taxon>
        <taxon>Shigella</taxon>
    </lineage>
</organism>
<comment type="subcellular location">
    <subcellularLocation>
        <location evidence="1">Periplasm</location>
    </subcellularLocation>
</comment>
<comment type="similarity">
    <text evidence="1">Belongs to the UPF0312 family. Type 1 subfamily.</text>
</comment>
<dbReference type="EMBL" id="CP000036">
    <property type="protein sequence ID" value="ABB66596.1"/>
    <property type="molecule type" value="Genomic_DNA"/>
</dbReference>
<dbReference type="RefSeq" id="WP_000749261.1">
    <property type="nucleotide sequence ID" value="NC_007613.1"/>
</dbReference>
<dbReference type="SMR" id="Q31ZB2"/>
<dbReference type="KEGG" id="sbo:SBO_2008"/>
<dbReference type="HOGENOM" id="CLU_071003_1_2_6"/>
<dbReference type="Proteomes" id="UP000007067">
    <property type="component" value="Chromosome"/>
</dbReference>
<dbReference type="GO" id="GO:0042597">
    <property type="term" value="C:periplasmic space"/>
    <property type="evidence" value="ECO:0007669"/>
    <property type="project" value="UniProtKB-SubCell"/>
</dbReference>
<dbReference type="Gene3D" id="2.40.128.110">
    <property type="entry name" value="Lipid/polyisoprenoid-binding, YceI-like"/>
    <property type="match status" value="1"/>
</dbReference>
<dbReference type="HAMAP" id="MF_00780">
    <property type="entry name" value="UPF0312"/>
    <property type="match status" value="1"/>
</dbReference>
<dbReference type="InterPro" id="IPR007372">
    <property type="entry name" value="Lipid/polyisoprenoid-bd_YceI"/>
</dbReference>
<dbReference type="InterPro" id="IPR036761">
    <property type="entry name" value="TTHA0802/YceI-like_sf"/>
</dbReference>
<dbReference type="InterPro" id="IPR023480">
    <property type="entry name" value="UPF0312/YceI"/>
</dbReference>
<dbReference type="NCBIfam" id="NF002994">
    <property type="entry name" value="PRK03757.1"/>
    <property type="match status" value="1"/>
</dbReference>
<dbReference type="PANTHER" id="PTHR34406">
    <property type="entry name" value="PROTEIN YCEI"/>
    <property type="match status" value="1"/>
</dbReference>
<dbReference type="PANTHER" id="PTHR34406:SF1">
    <property type="entry name" value="PROTEIN YCEI"/>
    <property type="match status" value="1"/>
</dbReference>
<dbReference type="Pfam" id="PF04264">
    <property type="entry name" value="YceI"/>
    <property type="match status" value="1"/>
</dbReference>
<dbReference type="SMART" id="SM00867">
    <property type="entry name" value="YceI"/>
    <property type="match status" value="1"/>
</dbReference>
<dbReference type="SUPFAM" id="SSF101874">
    <property type="entry name" value="YceI-like"/>
    <property type="match status" value="1"/>
</dbReference>
<reference key="1">
    <citation type="journal article" date="2005" name="Nucleic Acids Res.">
        <title>Genome dynamics and diversity of Shigella species, the etiologic agents of bacillary dysentery.</title>
        <authorList>
            <person name="Yang F."/>
            <person name="Yang J."/>
            <person name="Zhang X."/>
            <person name="Chen L."/>
            <person name="Jiang Y."/>
            <person name="Yan Y."/>
            <person name="Tang X."/>
            <person name="Wang J."/>
            <person name="Xiong Z."/>
            <person name="Dong J."/>
            <person name="Xue Y."/>
            <person name="Zhu Y."/>
            <person name="Xu X."/>
            <person name="Sun L."/>
            <person name="Chen S."/>
            <person name="Nie H."/>
            <person name="Peng J."/>
            <person name="Xu J."/>
            <person name="Wang Y."/>
            <person name="Yuan Z."/>
            <person name="Wen Y."/>
            <person name="Yao Z."/>
            <person name="Shen Y."/>
            <person name="Qiang B."/>
            <person name="Hou Y."/>
            <person name="Yu J."/>
            <person name="Jin Q."/>
        </authorList>
    </citation>
    <scope>NUCLEOTIDE SEQUENCE [LARGE SCALE GENOMIC DNA]</scope>
    <source>
        <strain>Sb227</strain>
    </source>
</reference>
<feature type="signal peptide" evidence="1">
    <location>
        <begin position="1"/>
        <end position="22"/>
    </location>
</feature>
<feature type="chain" id="PRO_0000226325" description="Protein YceI">
    <location>
        <begin position="23"/>
        <end position="191"/>
    </location>
</feature>
<protein>
    <recommendedName>
        <fullName evidence="1">Protein YceI</fullName>
    </recommendedName>
</protein>
<keyword id="KW-0574">Periplasm</keyword>
<keyword id="KW-0732">Signal</keyword>
<gene>
    <name evidence="1" type="primary">yceI</name>
    <name type="ordered locus">SBO_2008</name>
</gene>